<name>MLIP_RAT</name>
<gene>
    <name evidence="7" type="primary">Mlip</name>
    <name evidence="5" type="synonym">Cip</name>
</gene>
<protein>
    <recommendedName>
        <fullName evidence="7">Muscular LMNA-interacting protein</fullName>
    </recommendedName>
    <alternativeName>
        <fullName evidence="5">Cardiac Isl1-interacting protein</fullName>
        <shortName evidence="5">CIP</shortName>
    </alternativeName>
</protein>
<proteinExistence type="evidence at protein level"/>
<feature type="chain" id="PRO_0000441849" description="Muscular LMNA-interacting protein">
    <location>
        <begin position="1"/>
        <end position="966"/>
    </location>
</feature>
<feature type="region of interest" description="Disordered" evidence="2">
    <location>
        <begin position="132"/>
        <end position="154"/>
    </location>
</feature>
<feature type="region of interest" description="Required for interaction with ISL1" evidence="1">
    <location>
        <begin position="144"/>
        <end position="810"/>
    </location>
</feature>
<feature type="region of interest" description="Disordered" evidence="2">
    <location>
        <begin position="182"/>
        <end position="207"/>
    </location>
</feature>
<feature type="region of interest" description="Disordered" evidence="2">
    <location>
        <begin position="303"/>
        <end position="337"/>
    </location>
</feature>
<feature type="region of interest" description="Disordered" evidence="2">
    <location>
        <begin position="354"/>
        <end position="388"/>
    </location>
</feature>
<feature type="region of interest" description="Disordered" evidence="2">
    <location>
        <begin position="434"/>
        <end position="562"/>
    </location>
</feature>
<feature type="region of interest" description="Disordered" evidence="2">
    <location>
        <begin position="597"/>
        <end position="684"/>
    </location>
</feature>
<feature type="region of interest" description="Disordered" evidence="2">
    <location>
        <begin position="785"/>
        <end position="837"/>
    </location>
</feature>
<feature type="region of interest" description="Disordered" evidence="2">
    <location>
        <begin position="929"/>
        <end position="966"/>
    </location>
</feature>
<feature type="compositionally biased region" description="Polar residues" evidence="2">
    <location>
        <begin position="195"/>
        <end position="207"/>
    </location>
</feature>
<feature type="compositionally biased region" description="Polar residues" evidence="2">
    <location>
        <begin position="325"/>
        <end position="337"/>
    </location>
</feature>
<feature type="compositionally biased region" description="Low complexity" evidence="2">
    <location>
        <begin position="354"/>
        <end position="387"/>
    </location>
</feature>
<feature type="compositionally biased region" description="Low complexity" evidence="2">
    <location>
        <begin position="437"/>
        <end position="455"/>
    </location>
</feature>
<feature type="compositionally biased region" description="Low complexity" evidence="2">
    <location>
        <begin position="478"/>
        <end position="497"/>
    </location>
</feature>
<feature type="compositionally biased region" description="Polar residues" evidence="2">
    <location>
        <begin position="507"/>
        <end position="521"/>
    </location>
</feature>
<feature type="compositionally biased region" description="Basic and acidic residues" evidence="2">
    <location>
        <begin position="542"/>
        <end position="555"/>
    </location>
</feature>
<feature type="compositionally biased region" description="Basic and acidic residues" evidence="2">
    <location>
        <begin position="597"/>
        <end position="607"/>
    </location>
</feature>
<feature type="compositionally biased region" description="Polar residues" evidence="2">
    <location>
        <begin position="639"/>
        <end position="649"/>
    </location>
</feature>
<feature type="compositionally biased region" description="Polar residues" evidence="2">
    <location>
        <begin position="657"/>
        <end position="684"/>
    </location>
</feature>
<feature type="compositionally biased region" description="Low complexity" evidence="2">
    <location>
        <begin position="785"/>
        <end position="797"/>
    </location>
</feature>
<feature type="compositionally biased region" description="Polar residues" evidence="2">
    <location>
        <begin position="798"/>
        <end position="810"/>
    </location>
</feature>
<feature type="compositionally biased region" description="Low complexity" evidence="2">
    <location>
        <begin position="825"/>
        <end position="834"/>
    </location>
</feature>
<feature type="compositionally biased region" description="Polar residues" evidence="2">
    <location>
        <begin position="937"/>
        <end position="946"/>
    </location>
</feature>
<feature type="compositionally biased region" description="Basic and acidic residues" evidence="2">
    <location>
        <begin position="957"/>
        <end position="966"/>
    </location>
</feature>
<feature type="modified residue" description="Phosphoserine" evidence="8">
    <location>
        <position position="129"/>
    </location>
</feature>
<feature type="modified residue" description="Phosphoserine" evidence="8">
    <location>
        <position position="486"/>
    </location>
</feature>
<feature type="modified residue" description="Phosphoserine" evidence="1">
    <location>
        <position position="791"/>
    </location>
</feature>
<feature type="splice variant" id="VSP_061864" description="In isoform 1, isoform 2 and isoform 3.">
    <original>MTSCVLAGSIETTPKVSPGDSEAKPLIFTFVPTLRRLPTHIQLADTSKFLVKIPEEPTDKNPETVNR</original>
    <variation>MEFEKHEQGNALKKNEKLEERVT</variation>
    <location>
        <begin position="1"/>
        <end position="67"/>
    </location>
</feature>
<feature type="splice variant" id="VSP_061865" description="In isoform 3.">
    <location>
        <begin position="199"/>
        <end position="736"/>
    </location>
</feature>
<feature type="splice variant" id="VSP_061866" description="In isoform 2.">
    <location>
        <begin position="199"/>
        <end position="223"/>
    </location>
</feature>
<feature type="splice variant" id="VSP_061867" description="In isoform 1, isoform 2 and isoform 3.">
    <location>
        <begin position="759"/>
        <end position="786"/>
    </location>
</feature>
<feature type="splice variant" id="VSP_061868" description="In isoform 1, isoform 2 and isoform 3.">
    <location>
        <begin position="880"/>
        <end position="966"/>
    </location>
</feature>
<organism>
    <name type="scientific">Rattus norvegicus</name>
    <name type="common">Rat</name>
    <dbReference type="NCBI Taxonomy" id="10116"/>
    <lineage>
        <taxon>Eukaryota</taxon>
        <taxon>Metazoa</taxon>
        <taxon>Chordata</taxon>
        <taxon>Craniata</taxon>
        <taxon>Vertebrata</taxon>
        <taxon>Euteleostomi</taxon>
        <taxon>Mammalia</taxon>
        <taxon>Eutheria</taxon>
        <taxon>Euarchontoglires</taxon>
        <taxon>Glires</taxon>
        <taxon>Rodentia</taxon>
        <taxon>Myomorpha</taxon>
        <taxon>Muroidea</taxon>
        <taxon>Muridae</taxon>
        <taxon>Murinae</taxon>
        <taxon>Rattus</taxon>
    </lineage>
</organism>
<sequence length="966" mass="103653">MTSCVLAGSIETTPKVSPGDSEAKPLIFTFVPTLRRLPTHIQLADTSKFLVKIPEEPTDKNPETVNRFEYSDHMTFSCESKEERDQRILDYPSEVSGKNSQRKEFNTKEPQGMQKGDLFKAEYVFIVDSDGEDEATCRQGEQGPPGATGNIATRPKSLAISSSLASDVVRPKVRGVDVKVSSHPEIPHGIAPQQKHGQLTSPTTSEQLAHKPPAFSFVSPTNQKTPPVPAKVSGTTVLEEFHIRRLDVHGASEEETATYFHTTAHDSPLPAWKGASTLVFSPSAQLPGSSLCGSNVADHTRGLAPEAQKKVSTSSALNPREDVRTSPSPASGASLRSPSASYIPVRIVMHSLSPSPKPLTSSSHGSLSTVCSQTSSSGNLSKSGLKSPVPSRLSLLTAILKSNPSHQRPLSPASCPTFSLNSLASSTLTLDQKIKQTPSTPKKSLSSCSLTTGSTEQEQASAESHQPCHLSFFSKTTPLSQAQPPSPPALASSSYAATDTEKIPGSTLRSSTTPPQSQTDLFSLADVPSVTPGLSPLSSSKGRKDGDLRAPEKNRNICTRPSTLSFIPPINESTALSSSGKCFHPSPALSDLIDRSKRTCSQRHSDQRPNPSALPTPPVSRAGSASHPHLGYSILPPESSLTQALQRSPSALHPSCGSATCPSRTGMPDSTASNRSSRVSTPSLPVSLTRTKELISPCALSMSAGPENKKPKQYKTKSSYKAFAAIPTNTLLLEQKALDEPARTESNSKASVSDLPVELCFPAQLRQQTEELCATIDKVLQDSLSMHSSDSPSRPSQTMLGSETIKTPTTHPRAAGRETKYANLSSSSSTTSESQLTKPGVIRPVPIKSKLFLKKEEEVYEPNPFSKYLEDSSGLFSEQDMAIPHKPVSLHPLYQSKLYPPAKSLLRPQTLSHADCLTPGPFSHLSSFSLRDEQEKSPTLLSQDTYNKPGHPMVTIPEHDTLDSKE</sequence>
<dbReference type="EMBL" id="AABR07070794">
    <property type="status" value="NOT_ANNOTATED_CDS"/>
    <property type="molecule type" value="Genomic_DNA"/>
</dbReference>
<dbReference type="EMBL" id="AABR07070795">
    <property type="status" value="NOT_ANNOTATED_CDS"/>
    <property type="molecule type" value="Genomic_DNA"/>
</dbReference>
<dbReference type="EMBL" id="AABR07070796">
    <property type="status" value="NOT_ANNOTATED_CDS"/>
    <property type="molecule type" value="Genomic_DNA"/>
</dbReference>
<dbReference type="EMBL" id="BC092625">
    <property type="protein sequence ID" value="AAH92625.1"/>
    <property type="status" value="ALT_INIT"/>
    <property type="molecule type" value="mRNA"/>
</dbReference>
<dbReference type="SMR" id="A0A096MK47"/>
<dbReference type="STRING" id="10116.ENSRNOP00000068377"/>
<dbReference type="GlyGen" id="A0A096MK47">
    <property type="glycosylation" value="2 sites"/>
</dbReference>
<dbReference type="iPTMnet" id="A0A096MK47"/>
<dbReference type="PhosphoSitePlus" id="A0A096MK47"/>
<dbReference type="PaxDb" id="10116-ENSRNOP00000068377"/>
<dbReference type="Ensembl" id="ENSRNOT00000064754.4">
    <molecule id="A0A096MK47-3"/>
    <property type="protein sequence ID" value="ENSRNOP00000061707.4"/>
    <property type="gene ID" value="ENSRNOG00000005934.9"/>
</dbReference>
<dbReference type="Ensembl" id="ENSRNOT00000105297.1">
    <molecule id="A0A096MK47-4"/>
    <property type="protein sequence ID" value="ENSRNOP00000097271.1"/>
    <property type="gene ID" value="ENSRNOG00000005934.9"/>
</dbReference>
<dbReference type="AGR" id="RGD:1590513"/>
<dbReference type="RGD" id="1590513">
    <property type="gene designation" value="Mlip"/>
</dbReference>
<dbReference type="VEuPathDB" id="HostDB:ENSRNOG00000005934"/>
<dbReference type="eggNOG" id="ENOG502QTJV">
    <property type="taxonomic scope" value="Eukaryota"/>
</dbReference>
<dbReference type="GeneTree" id="ENSGT00390000015862"/>
<dbReference type="InParanoid" id="A0A096MK47"/>
<dbReference type="OMA" id="TSCEMRH"/>
<dbReference type="OrthoDB" id="9907594at2759"/>
<dbReference type="TreeFam" id="TF330818"/>
<dbReference type="PRO" id="PR:A0A096MK47"/>
<dbReference type="Proteomes" id="UP000002494">
    <property type="component" value="Chromosome 8"/>
</dbReference>
<dbReference type="Bgee" id="ENSRNOG00000005934">
    <property type="expression patterns" value="Expressed in heart and 11 other cell types or tissues"/>
</dbReference>
<dbReference type="ExpressionAtlas" id="A0A096MK47">
    <property type="expression patterns" value="baseline and differential"/>
</dbReference>
<dbReference type="GO" id="GO:0005829">
    <property type="term" value="C:cytosol"/>
    <property type="evidence" value="ECO:0007669"/>
    <property type="project" value="UniProtKB-SubCell"/>
</dbReference>
<dbReference type="GO" id="GO:0005635">
    <property type="term" value="C:nuclear envelope"/>
    <property type="evidence" value="ECO:0000266"/>
    <property type="project" value="RGD"/>
</dbReference>
<dbReference type="GO" id="GO:0031981">
    <property type="term" value="C:nuclear lumen"/>
    <property type="evidence" value="ECO:0000266"/>
    <property type="project" value="RGD"/>
</dbReference>
<dbReference type="GO" id="GO:0005634">
    <property type="term" value="C:nucleus"/>
    <property type="evidence" value="ECO:0000250"/>
    <property type="project" value="UniProtKB"/>
</dbReference>
<dbReference type="GO" id="GO:0016605">
    <property type="term" value="C:PML body"/>
    <property type="evidence" value="ECO:0000266"/>
    <property type="project" value="RGD"/>
</dbReference>
<dbReference type="GO" id="GO:0042383">
    <property type="term" value="C:sarcolemma"/>
    <property type="evidence" value="ECO:0000266"/>
    <property type="project" value="RGD"/>
</dbReference>
<dbReference type="GO" id="GO:0005521">
    <property type="term" value="F:lamin binding"/>
    <property type="evidence" value="ECO:0000266"/>
    <property type="project" value="RGD"/>
</dbReference>
<dbReference type="GO" id="GO:0003714">
    <property type="term" value="F:transcription corepressor activity"/>
    <property type="evidence" value="ECO:0000266"/>
    <property type="project" value="RGD"/>
</dbReference>
<dbReference type="GO" id="GO:0010614">
    <property type="term" value="P:negative regulation of cardiac muscle hypertrophy"/>
    <property type="evidence" value="ECO:0000250"/>
    <property type="project" value="UniProtKB"/>
</dbReference>
<dbReference type="GO" id="GO:1903243">
    <property type="term" value="P:negative regulation of cardiac muscle hypertrophy in response to stress"/>
    <property type="evidence" value="ECO:0000266"/>
    <property type="project" value="RGD"/>
</dbReference>
<dbReference type="GO" id="GO:0000122">
    <property type="term" value="P:negative regulation of transcription by RNA polymerase II"/>
    <property type="evidence" value="ECO:0000250"/>
    <property type="project" value="UniProtKB"/>
</dbReference>
<dbReference type="GO" id="GO:0045944">
    <property type="term" value="P:positive regulation of transcription by RNA polymerase II"/>
    <property type="evidence" value="ECO:0000250"/>
    <property type="project" value="UniProtKB"/>
</dbReference>
<dbReference type="GO" id="GO:0006366">
    <property type="term" value="P:transcription by RNA polymerase II"/>
    <property type="evidence" value="ECO:0000266"/>
    <property type="project" value="RGD"/>
</dbReference>
<dbReference type="InterPro" id="IPR029331">
    <property type="entry name" value="MLIP"/>
</dbReference>
<dbReference type="PANTHER" id="PTHR31514:SF1">
    <property type="entry name" value="MUSCULAR LMNA-INTERACTING PROTEIN"/>
    <property type="match status" value="1"/>
</dbReference>
<dbReference type="PANTHER" id="PTHR31514">
    <property type="entry name" value="MUSCULAR LMNA-INTERACTING PROTEIN MLIP"/>
    <property type="match status" value="1"/>
</dbReference>
<dbReference type="Pfam" id="PF15274">
    <property type="entry name" value="MLIP"/>
    <property type="match status" value="1"/>
</dbReference>
<comment type="function">
    <text evidence="1 3 4">Required for myoblast differentiation into myotubes, possibly acting as a transcriptional regulator of the myogenic program (By similarity). Required for cardiac adaptation to stress through integrated regulation of the AKT/mTOR pathways and FOXO1. Regulates cardiac homeostasis and plays a role in the protection against cardiac hypertrophy (PubMed:22343712, PubMed:26436652). Binds chromatin (By similarity). May act as a transcriptional cofactor for ISL1, repressing its transcriptional activity (By similarity). May also repress MYOCD transcriptional activity (By similarity).</text>
</comment>
<comment type="subunit">
    <text evidence="1">Directly interacts with LMNA (By similarity). Interacts with ISL1 (via N-terminal domain); the interaction represses ISL1 transactivator activity (By similarity). Interactions of ISL1 with MLIP1 and GCN5/KAT2A may be mutually exclusive (By similarity).</text>
</comment>
<comment type="subcellular location">
    <subcellularLocation>
        <location evidence="1">Nucleus</location>
    </subcellularLocation>
    <subcellularLocation>
        <location evidence="1">Nucleus envelope</location>
    </subcellularLocation>
    <subcellularLocation>
        <location evidence="1">Nucleus</location>
        <location evidence="1">PML body</location>
    </subcellularLocation>
    <subcellularLocation>
        <location evidence="1">Cytoplasm</location>
        <location evidence="1">Cytosol</location>
    </subcellularLocation>
    <subcellularLocation>
        <location evidence="1">Cell membrane</location>
        <location evidence="1">Sarcolemma</location>
        <topology evidence="1">Peripheral membrane protein</topology>
        <orientation evidence="1">Cytoplasmic side</orientation>
    </subcellularLocation>
</comment>
<comment type="alternative products">
    <event type="alternative splicing"/>
    <isoform>
        <id>A0A096MK47-4</id>
        <name>4</name>
        <sequence type="displayed"/>
    </isoform>
    <isoform>
        <id>A0A096MK47-1</id>
        <name>1</name>
        <sequence type="described" ref="VSP_061864 VSP_061867 VSP_061868"/>
    </isoform>
    <isoform>
        <id>A0A096MK47-2</id>
        <name>2</name>
        <sequence type="described" ref="VSP_061864 VSP_061866 VSP_061867 VSP_061868"/>
    </isoform>
    <isoform>
        <id>A0A096MK47-3</id>
        <name>3</name>
        <sequence type="described" ref="VSP_061864 VSP_061865 VSP_061867 VSP_061868"/>
    </isoform>
</comment>
<comment type="tissue specificity">
    <text evidence="3 4">Expressed in cardiomyoctes. Expression is highly reduced in hypertrophic cardiomyocytes.</text>
</comment>
<comment type="sequence caution" evidence="6">
    <conflict type="erroneous initiation">
        <sequence resource="EMBL-CDS" id="AAH92625"/>
    </conflict>
    <text>Extended N-terminus.</text>
</comment>
<accession>A0A096MK47</accession>
<accession>A0A8I6ARD4</accession>
<accession>D4A3C4</accession>
<accession>Q569A0</accession>
<evidence type="ECO:0000250" key="1">
    <source>
        <dbReference type="UniProtKB" id="Q5FW52"/>
    </source>
</evidence>
<evidence type="ECO:0000256" key="2">
    <source>
        <dbReference type="SAM" id="MobiDB-lite"/>
    </source>
</evidence>
<evidence type="ECO:0000269" key="3">
    <source>
    </source>
</evidence>
<evidence type="ECO:0000269" key="4">
    <source>
    </source>
</evidence>
<evidence type="ECO:0000303" key="5">
    <source>
    </source>
</evidence>
<evidence type="ECO:0000305" key="6"/>
<evidence type="ECO:0000312" key="7">
    <source>
        <dbReference type="RGD" id="1590513"/>
    </source>
</evidence>
<evidence type="ECO:0007744" key="8">
    <source>
    </source>
</evidence>
<reference key="1">
    <citation type="journal article" date="2004" name="Nature">
        <title>Genome sequence of the Brown Norway rat yields insights into mammalian evolution.</title>
        <authorList>
            <person name="Gibbs R.A."/>
            <person name="Weinstock G.M."/>
            <person name="Metzker M.L."/>
            <person name="Muzny D.M."/>
            <person name="Sodergren E.J."/>
            <person name="Scherer S."/>
            <person name="Scott G."/>
            <person name="Steffen D."/>
            <person name="Worley K.C."/>
            <person name="Burch P.E."/>
            <person name="Okwuonu G."/>
            <person name="Hines S."/>
            <person name="Lewis L."/>
            <person name="Deramo C."/>
            <person name="Delgado O."/>
            <person name="Dugan-Rocha S."/>
            <person name="Miner G."/>
            <person name="Morgan M."/>
            <person name="Hawes A."/>
            <person name="Gill R."/>
            <person name="Holt R.A."/>
            <person name="Adams M.D."/>
            <person name="Amanatides P.G."/>
            <person name="Baden-Tillson H."/>
            <person name="Barnstead M."/>
            <person name="Chin S."/>
            <person name="Evans C.A."/>
            <person name="Ferriera S."/>
            <person name="Fosler C."/>
            <person name="Glodek A."/>
            <person name="Gu Z."/>
            <person name="Jennings D."/>
            <person name="Kraft C.L."/>
            <person name="Nguyen T."/>
            <person name="Pfannkoch C.M."/>
            <person name="Sitter C."/>
            <person name="Sutton G.G."/>
            <person name="Venter J.C."/>
            <person name="Woodage T."/>
            <person name="Smith D."/>
            <person name="Lee H.-M."/>
            <person name="Gustafson E."/>
            <person name="Cahill P."/>
            <person name="Kana A."/>
            <person name="Doucette-Stamm L."/>
            <person name="Weinstock K."/>
            <person name="Fechtel K."/>
            <person name="Weiss R.B."/>
            <person name="Dunn D.M."/>
            <person name="Green E.D."/>
            <person name="Blakesley R.W."/>
            <person name="Bouffard G.G."/>
            <person name="De Jong P.J."/>
            <person name="Osoegawa K."/>
            <person name="Zhu B."/>
            <person name="Marra M."/>
            <person name="Schein J."/>
            <person name="Bosdet I."/>
            <person name="Fjell C."/>
            <person name="Jones S."/>
            <person name="Krzywinski M."/>
            <person name="Mathewson C."/>
            <person name="Siddiqui A."/>
            <person name="Wye N."/>
            <person name="McPherson J."/>
            <person name="Zhao S."/>
            <person name="Fraser C.M."/>
            <person name="Shetty J."/>
            <person name="Shatsman S."/>
            <person name="Geer K."/>
            <person name="Chen Y."/>
            <person name="Abramzon S."/>
            <person name="Nierman W.C."/>
            <person name="Havlak P.H."/>
            <person name="Chen R."/>
            <person name="Durbin K.J."/>
            <person name="Egan A."/>
            <person name="Ren Y."/>
            <person name="Song X.-Z."/>
            <person name="Li B."/>
            <person name="Liu Y."/>
            <person name="Qin X."/>
            <person name="Cawley S."/>
            <person name="Cooney A.J."/>
            <person name="D'Souza L.M."/>
            <person name="Martin K."/>
            <person name="Wu J.Q."/>
            <person name="Gonzalez-Garay M.L."/>
            <person name="Jackson A.R."/>
            <person name="Kalafus K.J."/>
            <person name="McLeod M.P."/>
            <person name="Milosavljevic A."/>
            <person name="Virk D."/>
            <person name="Volkov A."/>
            <person name="Wheeler D.A."/>
            <person name="Zhang Z."/>
            <person name="Bailey J.A."/>
            <person name="Eichler E.E."/>
            <person name="Tuzun E."/>
            <person name="Birney E."/>
            <person name="Mongin E."/>
            <person name="Ureta-Vidal A."/>
            <person name="Woodwark C."/>
            <person name="Zdobnov E."/>
            <person name="Bork P."/>
            <person name="Suyama M."/>
            <person name="Torrents D."/>
            <person name="Alexandersson M."/>
            <person name="Trask B.J."/>
            <person name="Young J.M."/>
            <person name="Huang H."/>
            <person name="Wang H."/>
            <person name="Xing H."/>
            <person name="Daniels S."/>
            <person name="Gietzen D."/>
            <person name="Schmidt J."/>
            <person name="Stevens K."/>
            <person name="Vitt U."/>
            <person name="Wingrove J."/>
            <person name="Camara F."/>
            <person name="Mar Alba M."/>
            <person name="Abril J.F."/>
            <person name="Guigo R."/>
            <person name="Smit A."/>
            <person name="Dubchak I."/>
            <person name="Rubin E.M."/>
            <person name="Couronne O."/>
            <person name="Poliakov A."/>
            <person name="Huebner N."/>
            <person name="Ganten D."/>
            <person name="Goesele C."/>
            <person name="Hummel O."/>
            <person name="Kreitler T."/>
            <person name="Lee Y.-A."/>
            <person name="Monti J."/>
            <person name="Schulz H."/>
            <person name="Zimdahl H."/>
            <person name="Himmelbauer H."/>
            <person name="Lehrach H."/>
            <person name="Jacob H.J."/>
            <person name="Bromberg S."/>
            <person name="Gullings-Handley J."/>
            <person name="Jensen-Seaman M.I."/>
            <person name="Kwitek A.E."/>
            <person name="Lazar J."/>
            <person name="Pasko D."/>
            <person name="Tonellato P.J."/>
            <person name="Twigger S."/>
            <person name="Ponting C.P."/>
            <person name="Duarte J.M."/>
            <person name="Rice S."/>
            <person name="Goodstadt L."/>
            <person name="Beatson S.A."/>
            <person name="Emes R.D."/>
            <person name="Winter E.E."/>
            <person name="Webber C."/>
            <person name="Brandt P."/>
            <person name="Nyakatura G."/>
            <person name="Adetobi M."/>
            <person name="Chiaromonte F."/>
            <person name="Elnitski L."/>
            <person name="Eswara P."/>
            <person name="Hardison R.C."/>
            <person name="Hou M."/>
            <person name="Kolbe D."/>
            <person name="Makova K."/>
            <person name="Miller W."/>
            <person name="Nekrutenko A."/>
            <person name="Riemer C."/>
            <person name="Schwartz S."/>
            <person name="Taylor J."/>
            <person name="Yang S."/>
            <person name="Zhang Y."/>
            <person name="Lindpaintner K."/>
            <person name="Andrews T.D."/>
            <person name="Caccamo M."/>
            <person name="Clamp M."/>
            <person name="Clarke L."/>
            <person name="Curwen V."/>
            <person name="Durbin R.M."/>
            <person name="Eyras E."/>
            <person name="Searle S.M."/>
            <person name="Cooper G.M."/>
            <person name="Batzoglou S."/>
            <person name="Brudno M."/>
            <person name="Sidow A."/>
            <person name="Stone E.A."/>
            <person name="Payseur B.A."/>
            <person name="Bourque G."/>
            <person name="Lopez-Otin C."/>
            <person name="Puente X.S."/>
            <person name="Chakrabarti K."/>
            <person name="Chatterji S."/>
            <person name="Dewey C."/>
            <person name="Pachter L."/>
            <person name="Bray N."/>
            <person name="Yap V.B."/>
            <person name="Caspi A."/>
            <person name="Tesler G."/>
            <person name="Pevzner P.A."/>
            <person name="Haussler D."/>
            <person name="Roskin K.M."/>
            <person name="Baertsch R."/>
            <person name="Clawson H."/>
            <person name="Furey T.S."/>
            <person name="Hinrichs A.S."/>
            <person name="Karolchik D."/>
            <person name="Kent W.J."/>
            <person name="Rosenbloom K.R."/>
            <person name="Trumbower H."/>
            <person name="Weirauch M."/>
            <person name="Cooper D.N."/>
            <person name="Stenson P.D."/>
            <person name="Ma B."/>
            <person name="Brent M."/>
            <person name="Arumugam M."/>
            <person name="Shteynberg D."/>
            <person name="Copley R.R."/>
            <person name="Taylor M.S."/>
            <person name="Riethman H."/>
            <person name="Mudunuri U."/>
            <person name="Peterson J."/>
            <person name="Guyer M."/>
            <person name="Felsenfeld A."/>
            <person name="Old S."/>
            <person name="Mockrin S."/>
            <person name="Collins F.S."/>
        </authorList>
    </citation>
    <scope>NUCLEOTIDE SEQUENCE [LARGE SCALE GENOMIC DNA]</scope>
    <source>
        <strain>Brown Norway</strain>
    </source>
</reference>
<reference key="2">
    <citation type="journal article" date="2004" name="Genome Res.">
        <title>The status, quality, and expansion of the NIH full-length cDNA project: the Mammalian Gene Collection (MGC).</title>
        <authorList>
            <consortium name="The MGC Project Team"/>
        </authorList>
    </citation>
    <scope>NUCLEOTIDE SEQUENCE [LARGE SCALE MRNA] OF 68-879 (ISOFORM 2)</scope>
    <source>
        <tissue>Brain</tissue>
    </source>
</reference>
<reference key="3">
    <citation type="journal article" date="2012" name="Circ. Res.">
        <title>CIP, a cardiac Isl1-interacting protein, represses cardiomyocyte hypertrophy.</title>
        <authorList>
            <person name="Huang Z.P."/>
            <person name="Young Seok H."/>
            <person name="Zhou B."/>
            <person name="Chen J."/>
            <person name="Chen J.F."/>
            <person name="Tao Y."/>
            <person name="Pu W.T."/>
            <person name="Wang D.Z."/>
        </authorList>
    </citation>
    <scope>FUNCTION</scope>
    <scope>TISSUE SPECIFICITY</scope>
</reference>
<reference key="4">
    <citation type="journal article" date="2012" name="Nat. Commun.">
        <title>Quantitative maps of protein phosphorylation sites across 14 different rat organs and tissues.</title>
        <authorList>
            <person name="Lundby A."/>
            <person name="Secher A."/>
            <person name="Lage K."/>
            <person name="Nordsborg N.B."/>
            <person name="Dmytriyev A."/>
            <person name="Lundby C."/>
            <person name="Olsen J.V."/>
        </authorList>
    </citation>
    <scope>PHOSPHORYLATION [LARGE SCALE ANALYSIS] AT SER-129 AND SER-486</scope>
    <scope>IDENTIFICATION BY MASS SPECTROMETRY [LARGE SCALE ANALYSIS]</scope>
</reference>
<reference key="5">
    <citation type="journal article" date="2015" name="J. Clin. Invest.">
        <title>Cardiomyocyte-enriched protein CIP protects against pathophysiological stresses and regulates cardiac homeostasis.</title>
        <authorList>
            <person name="Huang Z.P."/>
            <person name="Kataoka M."/>
            <person name="Chen J."/>
            <person name="Wu G."/>
            <person name="Ding J."/>
            <person name="Nie M."/>
            <person name="Lin Z."/>
            <person name="Liu J."/>
            <person name="Hu X."/>
            <person name="Ma L."/>
            <person name="Zhou B."/>
            <person name="Wakimoto H."/>
            <person name="Zeng C."/>
            <person name="Kyselovic J."/>
            <person name="Deng Z.L."/>
            <person name="Seidman C.E."/>
            <person name="Seidman J.G."/>
            <person name="Pu W.T."/>
            <person name="Wang D.Z."/>
        </authorList>
    </citation>
    <scope>FUNCTION</scope>
    <scope>TISSUE SPECIFICITY</scope>
</reference>
<keyword id="KW-0025">Alternative splicing</keyword>
<keyword id="KW-1003">Cell membrane</keyword>
<keyword id="KW-0963">Cytoplasm</keyword>
<keyword id="KW-0472">Membrane</keyword>
<keyword id="KW-0539">Nucleus</keyword>
<keyword id="KW-0597">Phosphoprotein</keyword>
<keyword id="KW-1185">Reference proteome</keyword>